<organism>
    <name type="scientific">Actinobacillus pleuropneumoniae serotype 7 (strain AP76)</name>
    <dbReference type="NCBI Taxonomy" id="537457"/>
    <lineage>
        <taxon>Bacteria</taxon>
        <taxon>Pseudomonadati</taxon>
        <taxon>Pseudomonadota</taxon>
        <taxon>Gammaproteobacteria</taxon>
        <taxon>Pasteurellales</taxon>
        <taxon>Pasteurellaceae</taxon>
        <taxon>Actinobacillus</taxon>
    </lineage>
</organism>
<name>NANA_ACTP7</name>
<keyword id="KW-0119">Carbohydrate metabolism</keyword>
<keyword id="KW-0963">Cytoplasm</keyword>
<keyword id="KW-0456">Lyase</keyword>
<keyword id="KW-0704">Schiff base</keyword>
<reference key="1">
    <citation type="submission" date="2008-06" db="EMBL/GenBank/DDBJ databases">
        <title>Genome and proteome analysis of A. pleuropneumoniae serotype 7.</title>
        <authorList>
            <person name="Linke B."/>
            <person name="Buettner F."/>
            <person name="Martinez-Arias R."/>
            <person name="Goesmann A."/>
            <person name="Baltes N."/>
            <person name="Tegetmeyer H."/>
            <person name="Singh M."/>
            <person name="Gerlach G.F."/>
        </authorList>
    </citation>
    <scope>NUCLEOTIDE SEQUENCE [LARGE SCALE GENOMIC DNA]</scope>
    <source>
        <strain>AP76</strain>
    </source>
</reference>
<accession>B3GZ05</accession>
<proteinExistence type="inferred from homology"/>
<sequence length="292" mass="32300">MKNLTGIFSALLVAFNEDGSINEQGLRQIIRHNIDKMKVDGLYVGGSTGENFMLSTAEKKEIFRIAKDEAKDQIALIAQVGSVNLQEAVELGKYATELGYDCLSAVTPFYYKFSFAEIKHYYDTIIAETGNNMIVYSIPFLTGVNIGVEQFGELYKNPKILGVKFTAGDFYLLERLKKAYPNHLIWAGFDEMMLPAVALGVDGAIGSTFNVNAPRARQIFELTKQGKLAEALAVQHVTNDLIEGILANGLYLTIKELLKLQGVEAGYCREPMTAKATDKQLEVAKALYAKFL</sequence>
<gene>
    <name evidence="1" type="primary">nanA</name>
    <name type="ordered locus">APP7_1839</name>
</gene>
<protein>
    <recommendedName>
        <fullName evidence="1">N-acetylneuraminate lyase</fullName>
        <shortName evidence="1">NAL</shortName>
        <shortName evidence="1">Neu5Ac lyase</shortName>
        <ecNumber evidence="1">4.1.3.3</ecNumber>
    </recommendedName>
    <alternativeName>
        <fullName evidence="1">N-acetylneuraminate pyruvate-lyase</fullName>
    </alternativeName>
    <alternativeName>
        <fullName evidence="1">N-acetylneuraminic acid aldolase</fullName>
    </alternativeName>
    <alternativeName>
        <fullName evidence="1">Sialate lyase</fullName>
    </alternativeName>
    <alternativeName>
        <fullName evidence="1">Sialic acid aldolase</fullName>
    </alternativeName>
    <alternativeName>
        <fullName evidence="1">Sialic acid lyase</fullName>
    </alternativeName>
</protein>
<comment type="function">
    <text evidence="1">Catalyzes the reversible aldol cleavage of N-acetylneuraminic acid (sialic acid; Neu5Ac) to form pyruvate and N-acetylmannosamine (ManNAc) via a Schiff base intermediate.</text>
</comment>
<comment type="catalytic activity">
    <reaction evidence="1">
        <text>aceneuramate = aldehydo-N-acetyl-D-mannosamine + pyruvate</text>
        <dbReference type="Rhea" id="RHEA:23296"/>
        <dbReference type="ChEBI" id="CHEBI:15361"/>
        <dbReference type="ChEBI" id="CHEBI:17122"/>
        <dbReference type="ChEBI" id="CHEBI:173083"/>
        <dbReference type="EC" id="4.1.3.3"/>
    </reaction>
</comment>
<comment type="pathway">
    <text evidence="1">Amino-sugar metabolism; N-acetylneuraminate degradation; D-fructose 6-phosphate from N-acetylneuraminate: step 1/5.</text>
</comment>
<comment type="subunit">
    <text evidence="1">Homotetramer.</text>
</comment>
<comment type="subcellular location">
    <subcellularLocation>
        <location evidence="1">Cytoplasm</location>
    </subcellularLocation>
</comment>
<comment type="similarity">
    <text evidence="1">Belongs to the DapA family. NanA subfamily.</text>
</comment>
<feature type="chain" id="PRO_1000139728" description="N-acetylneuraminate lyase">
    <location>
        <begin position="1"/>
        <end position="292"/>
    </location>
</feature>
<feature type="active site" description="Proton donor" evidence="1">
    <location>
        <position position="136"/>
    </location>
</feature>
<feature type="active site" description="Schiff-base intermediate with substrate" evidence="1">
    <location>
        <position position="164"/>
    </location>
</feature>
<feature type="binding site" evidence="1">
    <location>
        <position position="47"/>
    </location>
    <ligand>
        <name>aceneuramate</name>
        <dbReference type="ChEBI" id="CHEBI:173083"/>
    </ligand>
</feature>
<feature type="binding site" evidence="1">
    <location>
        <position position="48"/>
    </location>
    <ligand>
        <name>aceneuramate</name>
        <dbReference type="ChEBI" id="CHEBI:173083"/>
    </ligand>
</feature>
<feature type="binding site" evidence="1">
    <location>
        <position position="166"/>
    </location>
    <ligand>
        <name>aceneuramate</name>
        <dbReference type="ChEBI" id="CHEBI:173083"/>
    </ligand>
</feature>
<feature type="binding site" evidence="1">
    <location>
        <position position="188"/>
    </location>
    <ligand>
        <name>aceneuramate</name>
        <dbReference type="ChEBI" id="CHEBI:173083"/>
    </ligand>
</feature>
<feature type="binding site" evidence="1">
    <location>
        <position position="190"/>
    </location>
    <ligand>
        <name>aceneuramate</name>
        <dbReference type="ChEBI" id="CHEBI:173083"/>
    </ligand>
</feature>
<feature type="binding site" evidence="1">
    <location>
        <position position="191"/>
    </location>
    <ligand>
        <name>aceneuramate</name>
        <dbReference type="ChEBI" id="CHEBI:173083"/>
    </ligand>
</feature>
<feature type="binding site" evidence="1">
    <location>
        <position position="207"/>
    </location>
    <ligand>
        <name>aceneuramate</name>
        <dbReference type="ChEBI" id="CHEBI:173083"/>
    </ligand>
</feature>
<dbReference type="EC" id="4.1.3.3" evidence="1"/>
<dbReference type="EMBL" id="CP001091">
    <property type="protein sequence ID" value="ACE62491.1"/>
    <property type="molecule type" value="Genomic_DNA"/>
</dbReference>
<dbReference type="RefSeq" id="WP_005599265.1">
    <property type="nucleotide sequence ID" value="NC_010939.1"/>
</dbReference>
<dbReference type="SMR" id="B3GZ05"/>
<dbReference type="GeneID" id="48600046"/>
<dbReference type="KEGG" id="apa:APP7_1839"/>
<dbReference type="HOGENOM" id="CLU_049343_6_0_6"/>
<dbReference type="UniPathway" id="UPA00629">
    <property type="reaction ID" value="UER00680"/>
</dbReference>
<dbReference type="Proteomes" id="UP000001226">
    <property type="component" value="Chromosome"/>
</dbReference>
<dbReference type="GO" id="GO:0005829">
    <property type="term" value="C:cytosol"/>
    <property type="evidence" value="ECO:0007669"/>
    <property type="project" value="TreeGrafter"/>
</dbReference>
<dbReference type="GO" id="GO:0008747">
    <property type="term" value="F:N-acetylneuraminate lyase activity"/>
    <property type="evidence" value="ECO:0007669"/>
    <property type="project" value="UniProtKB-UniRule"/>
</dbReference>
<dbReference type="GO" id="GO:0005975">
    <property type="term" value="P:carbohydrate metabolic process"/>
    <property type="evidence" value="ECO:0007669"/>
    <property type="project" value="UniProtKB-UniRule"/>
</dbReference>
<dbReference type="GO" id="GO:0019262">
    <property type="term" value="P:N-acetylneuraminate catabolic process"/>
    <property type="evidence" value="ECO:0007669"/>
    <property type="project" value="UniProtKB-UniRule"/>
</dbReference>
<dbReference type="CDD" id="cd00954">
    <property type="entry name" value="NAL"/>
    <property type="match status" value="1"/>
</dbReference>
<dbReference type="FunFam" id="3.20.20.70:FF:000039">
    <property type="entry name" value="N-acetylneuraminate lyase"/>
    <property type="match status" value="1"/>
</dbReference>
<dbReference type="Gene3D" id="3.20.20.70">
    <property type="entry name" value="Aldolase class I"/>
    <property type="match status" value="1"/>
</dbReference>
<dbReference type="HAMAP" id="MF_01237">
    <property type="entry name" value="N_acetylneuram_lyase"/>
    <property type="match status" value="1"/>
</dbReference>
<dbReference type="InterPro" id="IPR013785">
    <property type="entry name" value="Aldolase_TIM"/>
</dbReference>
<dbReference type="InterPro" id="IPR002220">
    <property type="entry name" value="DapA-like"/>
</dbReference>
<dbReference type="InterPro" id="IPR005264">
    <property type="entry name" value="NanA"/>
</dbReference>
<dbReference type="InterPro" id="IPR020625">
    <property type="entry name" value="Schiff_base-form_aldolases_AS"/>
</dbReference>
<dbReference type="InterPro" id="IPR020624">
    <property type="entry name" value="Schiff_base-form_aldolases_CS"/>
</dbReference>
<dbReference type="NCBIfam" id="TIGR00683">
    <property type="entry name" value="nanA"/>
    <property type="match status" value="1"/>
</dbReference>
<dbReference type="NCBIfam" id="NF003164">
    <property type="entry name" value="PRK04147.1"/>
    <property type="match status" value="1"/>
</dbReference>
<dbReference type="PANTHER" id="PTHR42849">
    <property type="entry name" value="N-ACETYLNEURAMINATE LYASE"/>
    <property type="match status" value="1"/>
</dbReference>
<dbReference type="PANTHER" id="PTHR42849:SF1">
    <property type="entry name" value="N-ACETYLNEURAMINATE LYASE"/>
    <property type="match status" value="1"/>
</dbReference>
<dbReference type="Pfam" id="PF00701">
    <property type="entry name" value="DHDPS"/>
    <property type="match status" value="1"/>
</dbReference>
<dbReference type="PIRSF" id="PIRSF001365">
    <property type="entry name" value="DHDPS"/>
    <property type="match status" value="1"/>
</dbReference>
<dbReference type="PRINTS" id="PR00146">
    <property type="entry name" value="DHPICSNTHASE"/>
</dbReference>
<dbReference type="SMART" id="SM01130">
    <property type="entry name" value="DHDPS"/>
    <property type="match status" value="1"/>
</dbReference>
<dbReference type="SUPFAM" id="SSF51569">
    <property type="entry name" value="Aldolase"/>
    <property type="match status" value="1"/>
</dbReference>
<dbReference type="PROSITE" id="PS00665">
    <property type="entry name" value="DHDPS_1"/>
    <property type="match status" value="1"/>
</dbReference>
<dbReference type="PROSITE" id="PS00666">
    <property type="entry name" value="DHDPS_2"/>
    <property type="match status" value="1"/>
</dbReference>
<evidence type="ECO:0000255" key="1">
    <source>
        <dbReference type="HAMAP-Rule" id="MF_01237"/>
    </source>
</evidence>